<gene>
    <name evidence="1" type="primary">serC</name>
    <name type="ordered locus">Dalk_3380</name>
</gene>
<organism>
    <name type="scientific">Desulfatibacillum aliphaticivorans</name>
    <dbReference type="NCBI Taxonomy" id="218208"/>
    <lineage>
        <taxon>Bacteria</taxon>
        <taxon>Pseudomonadati</taxon>
        <taxon>Thermodesulfobacteriota</taxon>
        <taxon>Desulfobacteria</taxon>
        <taxon>Desulfobacterales</taxon>
        <taxon>Desulfatibacillaceae</taxon>
        <taxon>Desulfatibacillum</taxon>
    </lineage>
</organism>
<accession>B8FLC3</accession>
<protein>
    <recommendedName>
        <fullName evidence="1">Phosphoserine aminotransferase</fullName>
        <ecNumber evidence="1">2.6.1.52</ecNumber>
    </recommendedName>
    <alternativeName>
        <fullName evidence="1">Phosphohydroxythreonine aminotransferase</fullName>
        <shortName evidence="1">PSAT</shortName>
    </alternativeName>
</protein>
<sequence length="361" mass="39582">MKNRIHNFNAGPAALPLPVLEEIQAELLDFKGSGMSIMEVSHRSKWFDDVINETVERINRLMGLGDDFQVLFMQGGASTQFALVPMNLLPEGQSADYVNTGTWSTKAIKEAQAMGKTVNVAASSEDRNFCYIPKDIPLDPNAAYVHITSNNTIKGTAYTDFPDAGNVPLIADMSSDILSRPIDASKFGLIYAGAQKNMGPAGVCVAIIRKDMLERVPASLPSMFKYTTFADKNSMYNTPPCFAIYTVGLVVKWIEETIGGLEKMEARNRKKADTLYSIFDSSDFYSGTADKDSRSLMNVTFRLPSEDLEKAFVAQALENGLGGLKGHRSVGGCRASIYNPTSQEGIEALVDFMKEFEKKNG</sequence>
<dbReference type="EC" id="2.6.1.52" evidence="1"/>
<dbReference type="EMBL" id="CP001322">
    <property type="protein sequence ID" value="ACL05069.1"/>
    <property type="molecule type" value="Genomic_DNA"/>
</dbReference>
<dbReference type="RefSeq" id="WP_015948126.1">
    <property type="nucleotide sequence ID" value="NC_011768.1"/>
</dbReference>
<dbReference type="SMR" id="B8FLC3"/>
<dbReference type="KEGG" id="dal:Dalk_3380"/>
<dbReference type="eggNOG" id="COG1932">
    <property type="taxonomic scope" value="Bacteria"/>
</dbReference>
<dbReference type="HOGENOM" id="CLU_034866_0_2_7"/>
<dbReference type="UniPathway" id="UPA00135">
    <property type="reaction ID" value="UER00197"/>
</dbReference>
<dbReference type="UniPathway" id="UPA00244">
    <property type="reaction ID" value="UER00311"/>
</dbReference>
<dbReference type="Proteomes" id="UP000000739">
    <property type="component" value="Chromosome"/>
</dbReference>
<dbReference type="GO" id="GO:0005737">
    <property type="term" value="C:cytoplasm"/>
    <property type="evidence" value="ECO:0007669"/>
    <property type="project" value="UniProtKB-SubCell"/>
</dbReference>
<dbReference type="GO" id="GO:0004648">
    <property type="term" value="F:O-phospho-L-serine:2-oxoglutarate aminotransferase activity"/>
    <property type="evidence" value="ECO:0007669"/>
    <property type="project" value="UniProtKB-UniRule"/>
</dbReference>
<dbReference type="GO" id="GO:0030170">
    <property type="term" value="F:pyridoxal phosphate binding"/>
    <property type="evidence" value="ECO:0007669"/>
    <property type="project" value="UniProtKB-UniRule"/>
</dbReference>
<dbReference type="GO" id="GO:0006564">
    <property type="term" value="P:L-serine biosynthetic process"/>
    <property type="evidence" value="ECO:0007669"/>
    <property type="project" value="UniProtKB-UniRule"/>
</dbReference>
<dbReference type="GO" id="GO:0008615">
    <property type="term" value="P:pyridoxine biosynthetic process"/>
    <property type="evidence" value="ECO:0007669"/>
    <property type="project" value="UniProtKB-UniRule"/>
</dbReference>
<dbReference type="CDD" id="cd00611">
    <property type="entry name" value="PSAT_like"/>
    <property type="match status" value="1"/>
</dbReference>
<dbReference type="FunFam" id="3.40.640.10:FF:000010">
    <property type="entry name" value="Phosphoserine aminotransferase"/>
    <property type="match status" value="1"/>
</dbReference>
<dbReference type="FunFam" id="3.90.1150.10:FF:000006">
    <property type="entry name" value="Phosphoserine aminotransferase"/>
    <property type="match status" value="1"/>
</dbReference>
<dbReference type="Gene3D" id="3.90.1150.10">
    <property type="entry name" value="Aspartate Aminotransferase, domain 1"/>
    <property type="match status" value="1"/>
</dbReference>
<dbReference type="Gene3D" id="3.40.640.10">
    <property type="entry name" value="Type I PLP-dependent aspartate aminotransferase-like (Major domain)"/>
    <property type="match status" value="1"/>
</dbReference>
<dbReference type="HAMAP" id="MF_00160">
    <property type="entry name" value="SerC_aminotrans_5"/>
    <property type="match status" value="1"/>
</dbReference>
<dbReference type="InterPro" id="IPR000192">
    <property type="entry name" value="Aminotrans_V_dom"/>
</dbReference>
<dbReference type="InterPro" id="IPR022278">
    <property type="entry name" value="Pser_aminoTfrase"/>
</dbReference>
<dbReference type="InterPro" id="IPR015424">
    <property type="entry name" value="PyrdxlP-dep_Trfase"/>
</dbReference>
<dbReference type="InterPro" id="IPR015421">
    <property type="entry name" value="PyrdxlP-dep_Trfase_major"/>
</dbReference>
<dbReference type="InterPro" id="IPR015422">
    <property type="entry name" value="PyrdxlP-dep_Trfase_small"/>
</dbReference>
<dbReference type="NCBIfam" id="NF003764">
    <property type="entry name" value="PRK05355.1"/>
    <property type="match status" value="1"/>
</dbReference>
<dbReference type="NCBIfam" id="TIGR01364">
    <property type="entry name" value="serC_1"/>
    <property type="match status" value="1"/>
</dbReference>
<dbReference type="PANTHER" id="PTHR43247">
    <property type="entry name" value="PHOSPHOSERINE AMINOTRANSFERASE"/>
    <property type="match status" value="1"/>
</dbReference>
<dbReference type="PANTHER" id="PTHR43247:SF1">
    <property type="entry name" value="PHOSPHOSERINE AMINOTRANSFERASE"/>
    <property type="match status" value="1"/>
</dbReference>
<dbReference type="Pfam" id="PF00266">
    <property type="entry name" value="Aminotran_5"/>
    <property type="match status" value="1"/>
</dbReference>
<dbReference type="PIRSF" id="PIRSF000525">
    <property type="entry name" value="SerC"/>
    <property type="match status" value="1"/>
</dbReference>
<dbReference type="SUPFAM" id="SSF53383">
    <property type="entry name" value="PLP-dependent transferases"/>
    <property type="match status" value="1"/>
</dbReference>
<proteinExistence type="inferred from homology"/>
<feature type="chain" id="PRO_1000118178" description="Phosphoserine aminotransferase">
    <location>
        <begin position="1"/>
        <end position="361"/>
    </location>
</feature>
<feature type="binding site" evidence="1">
    <location>
        <position position="43"/>
    </location>
    <ligand>
        <name>L-glutamate</name>
        <dbReference type="ChEBI" id="CHEBI:29985"/>
    </ligand>
</feature>
<feature type="binding site" evidence="1">
    <location>
        <begin position="77"/>
        <end position="78"/>
    </location>
    <ligand>
        <name>pyridoxal 5'-phosphate</name>
        <dbReference type="ChEBI" id="CHEBI:597326"/>
    </ligand>
</feature>
<feature type="binding site" evidence="1">
    <location>
        <position position="103"/>
    </location>
    <ligand>
        <name>pyridoxal 5'-phosphate</name>
        <dbReference type="ChEBI" id="CHEBI:597326"/>
    </ligand>
</feature>
<feature type="binding site" evidence="1">
    <location>
        <position position="152"/>
    </location>
    <ligand>
        <name>pyridoxal 5'-phosphate</name>
        <dbReference type="ChEBI" id="CHEBI:597326"/>
    </ligand>
</feature>
<feature type="binding site" evidence="1">
    <location>
        <position position="172"/>
    </location>
    <ligand>
        <name>pyridoxal 5'-phosphate</name>
        <dbReference type="ChEBI" id="CHEBI:597326"/>
    </ligand>
</feature>
<feature type="binding site" evidence="1">
    <location>
        <position position="195"/>
    </location>
    <ligand>
        <name>pyridoxal 5'-phosphate</name>
        <dbReference type="ChEBI" id="CHEBI:597326"/>
    </ligand>
</feature>
<feature type="binding site" evidence="1">
    <location>
        <begin position="237"/>
        <end position="238"/>
    </location>
    <ligand>
        <name>pyridoxal 5'-phosphate</name>
        <dbReference type="ChEBI" id="CHEBI:597326"/>
    </ligand>
</feature>
<feature type="modified residue" description="N6-(pyridoxal phosphate)lysine" evidence="1">
    <location>
        <position position="196"/>
    </location>
</feature>
<reference key="1">
    <citation type="journal article" date="2012" name="Environ. Microbiol.">
        <title>The genome sequence of Desulfatibacillum alkenivorans AK-01: a blueprint for anaerobic alkane oxidation.</title>
        <authorList>
            <person name="Callaghan A.V."/>
            <person name="Morris B.E."/>
            <person name="Pereira I.A."/>
            <person name="McInerney M.J."/>
            <person name="Austin R.N."/>
            <person name="Groves J.T."/>
            <person name="Kukor J.J."/>
            <person name="Suflita J.M."/>
            <person name="Young L.Y."/>
            <person name="Zylstra G.J."/>
            <person name="Wawrik B."/>
        </authorList>
    </citation>
    <scope>NUCLEOTIDE SEQUENCE [LARGE SCALE GENOMIC DNA]</scope>
    <source>
        <strain>AK-01</strain>
    </source>
</reference>
<comment type="function">
    <text evidence="1">Catalyzes the reversible conversion of 3-phosphohydroxypyruvate to phosphoserine and of 3-hydroxy-2-oxo-4-phosphonooxybutanoate to phosphohydroxythreonine.</text>
</comment>
<comment type="catalytic activity">
    <reaction evidence="1">
        <text>O-phospho-L-serine + 2-oxoglutarate = 3-phosphooxypyruvate + L-glutamate</text>
        <dbReference type="Rhea" id="RHEA:14329"/>
        <dbReference type="ChEBI" id="CHEBI:16810"/>
        <dbReference type="ChEBI" id="CHEBI:18110"/>
        <dbReference type="ChEBI" id="CHEBI:29985"/>
        <dbReference type="ChEBI" id="CHEBI:57524"/>
        <dbReference type="EC" id="2.6.1.52"/>
    </reaction>
</comment>
<comment type="catalytic activity">
    <reaction evidence="1">
        <text>4-(phosphooxy)-L-threonine + 2-oxoglutarate = (R)-3-hydroxy-2-oxo-4-phosphooxybutanoate + L-glutamate</text>
        <dbReference type="Rhea" id="RHEA:16573"/>
        <dbReference type="ChEBI" id="CHEBI:16810"/>
        <dbReference type="ChEBI" id="CHEBI:29985"/>
        <dbReference type="ChEBI" id="CHEBI:58452"/>
        <dbReference type="ChEBI" id="CHEBI:58538"/>
        <dbReference type="EC" id="2.6.1.52"/>
    </reaction>
</comment>
<comment type="cofactor">
    <cofactor evidence="1">
        <name>pyridoxal 5'-phosphate</name>
        <dbReference type="ChEBI" id="CHEBI:597326"/>
    </cofactor>
    <text evidence="1">Binds 1 pyridoxal phosphate per subunit.</text>
</comment>
<comment type="pathway">
    <text evidence="1">Amino-acid biosynthesis; L-serine biosynthesis; L-serine from 3-phospho-D-glycerate: step 2/3.</text>
</comment>
<comment type="pathway">
    <text evidence="1">Cofactor biosynthesis; pyridoxine 5'-phosphate biosynthesis; pyridoxine 5'-phosphate from D-erythrose 4-phosphate: step 3/5.</text>
</comment>
<comment type="subunit">
    <text evidence="1">Homodimer.</text>
</comment>
<comment type="subcellular location">
    <subcellularLocation>
        <location evidence="1">Cytoplasm</location>
    </subcellularLocation>
</comment>
<comment type="similarity">
    <text evidence="1">Belongs to the class-V pyridoxal-phosphate-dependent aminotransferase family. SerC subfamily.</text>
</comment>
<name>SERC_DESAL</name>
<keyword id="KW-0028">Amino-acid biosynthesis</keyword>
<keyword id="KW-0032">Aminotransferase</keyword>
<keyword id="KW-0963">Cytoplasm</keyword>
<keyword id="KW-0663">Pyridoxal phosphate</keyword>
<keyword id="KW-0664">Pyridoxine biosynthesis</keyword>
<keyword id="KW-1185">Reference proteome</keyword>
<keyword id="KW-0718">Serine biosynthesis</keyword>
<keyword id="KW-0808">Transferase</keyword>
<evidence type="ECO:0000255" key="1">
    <source>
        <dbReference type="HAMAP-Rule" id="MF_00160"/>
    </source>
</evidence>